<organism>
    <name type="scientific">Paraburkholderia xenovorans (strain LB400)</name>
    <dbReference type="NCBI Taxonomy" id="266265"/>
    <lineage>
        <taxon>Bacteria</taxon>
        <taxon>Pseudomonadati</taxon>
        <taxon>Pseudomonadota</taxon>
        <taxon>Betaproteobacteria</taxon>
        <taxon>Burkholderiales</taxon>
        <taxon>Burkholderiaceae</taxon>
        <taxon>Paraburkholderia</taxon>
    </lineage>
</organism>
<dbReference type="EC" id="3.1.1.61" evidence="1"/>
<dbReference type="EC" id="3.5.1.44" evidence="1"/>
<dbReference type="EMBL" id="CP000270">
    <property type="protein sequence ID" value="ABE32807.1"/>
    <property type="molecule type" value="Genomic_DNA"/>
</dbReference>
<dbReference type="RefSeq" id="WP_011490222.1">
    <property type="nucleotide sequence ID" value="NC_007951.1"/>
</dbReference>
<dbReference type="SMR" id="Q13SY2"/>
<dbReference type="STRING" id="266265.Bxe_A0124"/>
<dbReference type="KEGG" id="bxb:DR64_2299"/>
<dbReference type="KEGG" id="bxe:Bxe_A0124"/>
<dbReference type="PATRIC" id="fig|266265.5.peg.4488"/>
<dbReference type="eggNOG" id="COG2201">
    <property type="taxonomic scope" value="Bacteria"/>
</dbReference>
<dbReference type="Proteomes" id="UP000001817">
    <property type="component" value="Chromosome 1"/>
</dbReference>
<dbReference type="GO" id="GO:0005737">
    <property type="term" value="C:cytoplasm"/>
    <property type="evidence" value="ECO:0007669"/>
    <property type="project" value="UniProtKB-SubCell"/>
</dbReference>
<dbReference type="GO" id="GO:0000156">
    <property type="term" value="F:phosphorelay response regulator activity"/>
    <property type="evidence" value="ECO:0007669"/>
    <property type="project" value="InterPro"/>
</dbReference>
<dbReference type="GO" id="GO:0008984">
    <property type="term" value="F:protein-glutamate methylesterase activity"/>
    <property type="evidence" value="ECO:0007669"/>
    <property type="project" value="UniProtKB-UniRule"/>
</dbReference>
<dbReference type="GO" id="GO:0050568">
    <property type="term" value="F:protein-glutamine glutaminase activity"/>
    <property type="evidence" value="ECO:0007669"/>
    <property type="project" value="UniProtKB-UniRule"/>
</dbReference>
<dbReference type="GO" id="GO:0006935">
    <property type="term" value="P:chemotaxis"/>
    <property type="evidence" value="ECO:0007669"/>
    <property type="project" value="UniProtKB-UniRule"/>
</dbReference>
<dbReference type="CDD" id="cd16432">
    <property type="entry name" value="CheB_Rec"/>
    <property type="match status" value="1"/>
</dbReference>
<dbReference type="CDD" id="cd17541">
    <property type="entry name" value="REC_CheB-like"/>
    <property type="match status" value="1"/>
</dbReference>
<dbReference type="FunFam" id="3.40.50.180:FF:000001">
    <property type="entry name" value="Protein-glutamate methylesterase/protein-glutamine glutaminase"/>
    <property type="match status" value="1"/>
</dbReference>
<dbReference type="FunFam" id="3.40.50.2300:FF:000060">
    <property type="entry name" value="Protein-glutamate methylesterase/protein-glutamine glutaminase"/>
    <property type="match status" value="1"/>
</dbReference>
<dbReference type="Gene3D" id="3.40.50.2300">
    <property type="match status" value="1"/>
</dbReference>
<dbReference type="Gene3D" id="3.40.50.180">
    <property type="entry name" value="Methylesterase CheB, C-terminal domain"/>
    <property type="match status" value="1"/>
</dbReference>
<dbReference type="HAMAP" id="MF_00099">
    <property type="entry name" value="CheB_chemtxs"/>
    <property type="match status" value="1"/>
</dbReference>
<dbReference type="InterPro" id="IPR008248">
    <property type="entry name" value="CheB-like"/>
</dbReference>
<dbReference type="InterPro" id="IPR035909">
    <property type="entry name" value="CheB_C"/>
</dbReference>
<dbReference type="InterPro" id="IPR011006">
    <property type="entry name" value="CheY-like_superfamily"/>
</dbReference>
<dbReference type="InterPro" id="IPR000673">
    <property type="entry name" value="Sig_transdc_resp-reg_Me-estase"/>
</dbReference>
<dbReference type="InterPro" id="IPR001789">
    <property type="entry name" value="Sig_transdc_resp-reg_receiver"/>
</dbReference>
<dbReference type="NCBIfam" id="NF001965">
    <property type="entry name" value="PRK00742.1"/>
    <property type="match status" value="1"/>
</dbReference>
<dbReference type="NCBIfam" id="NF009206">
    <property type="entry name" value="PRK12555.1"/>
    <property type="match status" value="1"/>
</dbReference>
<dbReference type="PANTHER" id="PTHR42872">
    <property type="entry name" value="PROTEIN-GLUTAMATE METHYLESTERASE/PROTEIN-GLUTAMINE GLUTAMINASE"/>
    <property type="match status" value="1"/>
</dbReference>
<dbReference type="PANTHER" id="PTHR42872:SF6">
    <property type="entry name" value="PROTEIN-GLUTAMATE METHYLESTERASE_PROTEIN-GLUTAMINE GLUTAMINASE"/>
    <property type="match status" value="1"/>
</dbReference>
<dbReference type="Pfam" id="PF01339">
    <property type="entry name" value="CheB_methylest"/>
    <property type="match status" value="1"/>
</dbReference>
<dbReference type="Pfam" id="PF00072">
    <property type="entry name" value="Response_reg"/>
    <property type="match status" value="1"/>
</dbReference>
<dbReference type="PIRSF" id="PIRSF000876">
    <property type="entry name" value="RR_chemtxs_CheB"/>
    <property type="match status" value="1"/>
</dbReference>
<dbReference type="SMART" id="SM00448">
    <property type="entry name" value="REC"/>
    <property type="match status" value="1"/>
</dbReference>
<dbReference type="SUPFAM" id="SSF52172">
    <property type="entry name" value="CheY-like"/>
    <property type="match status" value="1"/>
</dbReference>
<dbReference type="SUPFAM" id="SSF52738">
    <property type="entry name" value="Methylesterase CheB, C-terminal domain"/>
    <property type="match status" value="1"/>
</dbReference>
<dbReference type="PROSITE" id="PS50122">
    <property type="entry name" value="CHEB"/>
    <property type="match status" value="1"/>
</dbReference>
<dbReference type="PROSITE" id="PS50110">
    <property type="entry name" value="RESPONSE_REGULATORY"/>
    <property type="match status" value="1"/>
</dbReference>
<proteinExistence type="inferred from homology"/>
<sequence>MQKIKVLCVDDSALIRSLMTEIINGQPDMTVVATAPDPLVARELIKQHNPDVLTLDVEMPRMDGLDFLEKLMRLRPMPVVMVSSLTERGNEITLRALELGAVDFVTKPKVGIRDGMLDYSEKLADKIRAAARARVRQSAPVQHAAAHAAHAPVGAAPLFNNPLLSTEKLIIVGASTGGTEAIREVLVPLPPDAPAVLIAQHMPPGFTKSFAQRLNGLCRITVKEAEHGERVLPGHAYIAPGHAHLLLARSGANYIAHLSDEPPVNRHRPSVDVLFRSAAQHAGKNAVGVILTGMGRDGAAGLLDMKKAGAYTLAQDEASCIVFGMPREAIALGAADEIASLPEMSRRVMARLSSMGDRVQRV</sequence>
<protein>
    <recommendedName>
        <fullName evidence="1">Protein-glutamate methylesterase/protein-glutamine glutaminase</fullName>
        <ecNumber evidence="1">3.1.1.61</ecNumber>
        <ecNumber evidence="1">3.5.1.44</ecNumber>
    </recommendedName>
</protein>
<accession>Q13SY2</accession>
<gene>
    <name evidence="1" type="primary">cheB</name>
    <name type="ordered locus">Bxeno_A4269</name>
    <name type="ORF">Bxe_A0124</name>
</gene>
<name>CHEB_PARXL</name>
<comment type="function">
    <text evidence="1">Involved in chemotaxis. Part of a chemotaxis signal transduction system that modulates chemotaxis in response to various stimuli. Catalyzes the demethylation of specific methylglutamate residues introduced into the chemoreceptors (methyl-accepting chemotaxis proteins or MCP) by CheR. Also mediates the irreversible deamidation of specific glutamine residues to glutamic acid.</text>
</comment>
<comment type="catalytic activity">
    <reaction evidence="1">
        <text>[protein]-L-glutamate 5-O-methyl ester + H2O = L-glutamyl-[protein] + methanol + H(+)</text>
        <dbReference type="Rhea" id="RHEA:23236"/>
        <dbReference type="Rhea" id="RHEA-COMP:10208"/>
        <dbReference type="Rhea" id="RHEA-COMP:10311"/>
        <dbReference type="ChEBI" id="CHEBI:15377"/>
        <dbReference type="ChEBI" id="CHEBI:15378"/>
        <dbReference type="ChEBI" id="CHEBI:17790"/>
        <dbReference type="ChEBI" id="CHEBI:29973"/>
        <dbReference type="ChEBI" id="CHEBI:82795"/>
        <dbReference type="EC" id="3.1.1.61"/>
    </reaction>
</comment>
<comment type="catalytic activity">
    <reaction evidence="1">
        <text>L-glutaminyl-[protein] + H2O = L-glutamyl-[protein] + NH4(+)</text>
        <dbReference type="Rhea" id="RHEA:16441"/>
        <dbReference type="Rhea" id="RHEA-COMP:10207"/>
        <dbReference type="Rhea" id="RHEA-COMP:10208"/>
        <dbReference type="ChEBI" id="CHEBI:15377"/>
        <dbReference type="ChEBI" id="CHEBI:28938"/>
        <dbReference type="ChEBI" id="CHEBI:29973"/>
        <dbReference type="ChEBI" id="CHEBI:30011"/>
        <dbReference type="EC" id="3.5.1.44"/>
    </reaction>
</comment>
<comment type="subcellular location">
    <subcellularLocation>
        <location evidence="1">Cytoplasm</location>
    </subcellularLocation>
</comment>
<comment type="domain">
    <text evidence="1">Contains a C-terminal catalytic domain, and an N-terminal region which modulates catalytic activity.</text>
</comment>
<comment type="PTM">
    <text evidence="1">Phosphorylated by CheA. Phosphorylation of the N-terminal regulatory domain activates the methylesterase activity.</text>
</comment>
<comment type="similarity">
    <text evidence="1">Belongs to the CheB family.</text>
</comment>
<feature type="chain" id="PRO_0000264271" description="Protein-glutamate methylesterase/protein-glutamine glutaminase">
    <location>
        <begin position="1"/>
        <end position="362"/>
    </location>
</feature>
<feature type="domain" description="Response regulatory" evidence="1">
    <location>
        <begin position="5"/>
        <end position="122"/>
    </location>
</feature>
<feature type="domain" description="CheB-type methylesterase" evidence="1">
    <location>
        <begin position="163"/>
        <end position="355"/>
    </location>
</feature>
<feature type="active site" evidence="1">
    <location>
        <position position="175"/>
    </location>
</feature>
<feature type="active site" evidence="1">
    <location>
        <position position="201"/>
    </location>
</feature>
<feature type="active site" evidence="1">
    <location>
        <position position="297"/>
    </location>
</feature>
<feature type="modified residue" description="4-aspartylphosphate" evidence="1">
    <location>
        <position position="56"/>
    </location>
</feature>
<reference key="1">
    <citation type="journal article" date="2006" name="Proc. Natl. Acad. Sci. U.S.A.">
        <title>Burkholderia xenovorans LB400 harbors a multi-replicon, 9.73-Mbp genome shaped for versatility.</title>
        <authorList>
            <person name="Chain P.S.G."/>
            <person name="Denef V.J."/>
            <person name="Konstantinidis K.T."/>
            <person name="Vergez L.M."/>
            <person name="Agullo L."/>
            <person name="Reyes V.L."/>
            <person name="Hauser L."/>
            <person name="Cordova M."/>
            <person name="Gomez L."/>
            <person name="Gonzalez M."/>
            <person name="Land M."/>
            <person name="Lao V."/>
            <person name="Larimer F."/>
            <person name="LiPuma J.J."/>
            <person name="Mahenthiralingam E."/>
            <person name="Malfatti S.A."/>
            <person name="Marx C.J."/>
            <person name="Parnell J.J."/>
            <person name="Ramette A."/>
            <person name="Richardson P."/>
            <person name="Seeger M."/>
            <person name="Smith D."/>
            <person name="Spilker T."/>
            <person name="Sul W.J."/>
            <person name="Tsoi T.V."/>
            <person name="Ulrich L.E."/>
            <person name="Zhulin I.B."/>
            <person name="Tiedje J.M."/>
        </authorList>
    </citation>
    <scope>NUCLEOTIDE SEQUENCE [LARGE SCALE GENOMIC DNA]</scope>
    <source>
        <strain>LB400</strain>
    </source>
</reference>
<evidence type="ECO:0000255" key="1">
    <source>
        <dbReference type="HAMAP-Rule" id="MF_00099"/>
    </source>
</evidence>
<keyword id="KW-0145">Chemotaxis</keyword>
<keyword id="KW-0963">Cytoplasm</keyword>
<keyword id="KW-0378">Hydrolase</keyword>
<keyword id="KW-0597">Phosphoprotein</keyword>
<keyword id="KW-1185">Reference proteome</keyword>